<reference key="1">
    <citation type="submission" date="2008-12" db="EMBL/GenBank/DDBJ databases">
        <title>Complete sequence of chromosome of Methylobacterium chloromethanicum CM4.</title>
        <authorList>
            <consortium name="US DOE Joint Genome Institute"/>
            <person name="Lucas S."/>
            <person name="Copeland A."/>
            <person name="Lapidus A."/>
            <person name="Glavina del Rio T."/>
            <person name="Dalin E."/>
            <person name="Tice H."/>
            <person name="Bruce D."/>
            <person name="Goodwin L."/>
            <person name="Pitluck S."/>
            <person name="Chertkov O."/>
            <person name="Brettin T."/>
            <person name="Detter J.C."/>
            <person name="Han C."/>
            <person name="Larimer F."/>
            <person name="Land M."/>
            <person name="Hauser L."/>
            <person name="Kyrpides N."/>
            <person name="Mikhailova N."/>
            <person name="Marx C."/>
            <person name="Richardson P."/>
        </authorList>
    </citation>
    <scope>NUCLEOTIDE SEQUENCE [LARGE SCALE GENOMIC DNA]</scope>
    <source>
        <strain>CM4 / NCIMB 13688</strain>
    </source>
</reference>
<name>RBFA_METC4</name>
<protein>
    <recommendedName>
        <fullName evidence="1">Ribosome-binding factor A</fullName>
    </recommendedName>
</protein>
<organism>
    <name type="scientific">Methylorubrum extorquens (strain CM4 / NCIMB 13688)</name>
    <name type="common">Methylobacterium extorquens</name>
    <dbReference type="NCBI Taxonomy" id="440085"/>
    <lineage>
        <taxon>Bacteria</taxon>
        <taxon>Pseudomonadati</taxon>
        <taxon>Pseudomonadota</taxon>
        <taxon>Alphaproteobacteria</taxon>
        <taxon>Hyphomicrobiales</taxon>
        <taxon>Methylobacteriaceae</taxon>
        <taxon>Methylorubrum</taxon>
    </lineage>
</organism>
<keyword id="KW-0963">Cytoplasm</keyword>
<keyword id="KW-0690">Ribosome biogenesis</keyword>
<feature type="chain" id="PRO_1000201639" description="Ribosome-binding factor A">
    <location>
        <begin position="1"/>
        <end position="145"/>
    </location>
</feature>
<feature type="region of interest" description="Disordered" evidence="2">
    <location>
        <begin position="122"/>
        <end position="145"/>
    </location>
</feature>
<feature type="compositionally biased region" description="Basic and acidic residues" evidence="2">
    <location>
        <begin position="122"/>
        <end position="132"/>
    </location>
</feature>
<gene>
    <name evidence="1" type="primary">rbfA</name>
    <name type="ordered locus">Mchl_2922</name>
</gene>
<comment type="function">
    <text evidence="1">One of several proteins that assist in the late maturation steps of the functional core of the 30S ribosomal subunit. Associates with free 30S ribosomal subunits (but not with 30S subunits that are part of 70S ribosomes or polysomes). Required for efficient processing of 16S rRNA. May interact with the 5'-terminal helix region of 16S rRNA.</text>
</comment>
<comment type="subunit">
    <text evidence="1">Monomer. Binds 30S ribosomal subunits, but not 50S ribosomal subunits or 70S ribosomes.</text>
</comment>
<comment type="subcellular location">
    <subcellularLocation>
        <location evidence="1">Cytoplasm</location>
    </subcellularLocation>
</comment>
<comment type="similarity">
    <text evidence="1">Belongs to the RbfA family.</text>
</comment>
<proteinExistence type="inferred from homology"/>
<sequence length="145" mass="16356">MAQKQTPSGPTQRQQRVAELIRHALAEVLQRGDIQDPVLGSHVVTVPEVRMSPDLKLATAYVMPLGGQDEAPVIAALERHKKILRQEVARRVNLKFAPDLRFRRDETFDEAARIDQLLRSEKVQRDLESAPREDDEGEPASSSRD</sequence>
<accession>B7KQJ7</accession>
<dbReference type="EMBL" id="CP001298">
    <property type="protein sequence ID" value="ACK83761.1"/>
    <property type="molecule type" value="Genomic_DNA"/>
</dbReference>
<dbReference type="RefSeq" id="WP_015951187.1">
    <property type="nucleotide sequence ID" value="NC_011757.1"/>
</dbReference>
<dbReference type="SMR" id="B7KQJ7"/>
<dbReference type="KEGG" id="mch:Mchl_2922"/>
<dbReference type="HOGENOM" id="CLU_089475_1_0_5"/>
<dbReference type="Proteomes" id="UP000002385">
    <property type="component" value="Chromosome"/>
</dbReference>
<dbReference type="GO" id="GO:0005829">
    <property type="term" value="C:cytosol"/>
    <property type="evidence" value="ECO:0007669"/>
    <property type="project" value="TreeGrafter"/>
</dbReference>
<dbReference type="GO" id="GO:0043024">
    <property type="term" value="F:ribosomal small subunit binding"/>
    <property type="evidence" value="ECO:0007669"/>
    <property type="project" value="TreeGrafter"/>
</dbReference>
<dbReference type="GO" id="GO:0030490">
    <property type="term" value="P:maturation of SSU-rRNA"/>
    <property type="evidence" value="ECO:0007669"/>
    <property type="project" value="UniProtKB-UniRule"/>
</dbReference>
<dbReference type="Gene3D" id="3.30.300.20">
    <property type="match status" value="1"/>
</dbReference>
<dbReference type="HAMAP" id="MF_00003">
    <property type="entry name" value="RbfA"/>
    <property type="match status" value="1"/>
</dbReference>
<dbReference type="InterPro" id="IPR015946">
    <property type="entry name" value="KH_dom-like_a/b"/>
</dbReference>
<dbReference type="InterPro" id="IPR000238">
    <property type="entry name" value="RbfA"/>
</dbReference>
<dbReference type="InterPro" id="IPR023799">
    <property type="entry name" value="RbfA_dom_sf"/>
</dbReference>
<dbReference type="InterPro" id="IPR020053">
    <property type="entry name" value="Ribosome-bd_factorA_CS"/>
</dbReference>
<dbReference type="NCBIfam" id="NF001802">
    <property type="entry name" value="PRK00521.2-5"/>
    <property type="match status" value="1"/>
</dbReference>
<dbReference type="NCBIfam" id="TIGR00082">
    <property type="entry name" value="rbfA"/>
    <property type="match status" value="1"/>
</dbReference>
<dbReference type="PANTHER" id="PTHR33515">
    <property type="entry name" value="RIBOSOME-BINDING FACTOR A, CHLOROPLASTIC-RELATED"/>
    <property type="match status" value="1"/>
</dbReference>
<dbReference type="PANTHER" id="PTHR33515:SF1">
    <property type="entry name" value="RIBOSOME-BINDING FACTOR A, CHLOROPLASTIC-RELATED"/>
    <property type="match status" value="1"/>
</dbReference>
<dbReference type="Pfam" id="PF02033">
    <property type="entry name" value="RBFA"/>
    <property type="match status" value="1"/>
</dbReference>
<dbReference type="SUPFAM" id="SSF89919">
    <property type="entry name" value="Ribosome-binding factor A, RbfA"/>
    <property type="match status" value="1"/>
</dbReference>
<dbReference type="PROSITE" id="PS01319">
    <property type="entry name" value="RBFA"/>
    <property type="match status" value="1"/>
</dbReference>
<evidence type="ECO:0000255" key="1">
    <source>
        <dbReference type="HAMAP-Rule" id="MF_00003"/>
    </source>
</evidence>
<evidence type="ECO:0000256" key="2">
    <source>
        <dbReference type="SAM" id="MobiDB-lite"/>
    </source>
</evidence>